<dbReference type="EC" id="5.4.99.25" evidence="1"/>
<dbReference type="EMBL" id="AE000782">
    <property type="protein sequence ID" value="AAB90995.1"/>
    <property type="molecule type" value="Genomic_DNA"/>
</dbReference>
<dbReference type="PIR" id="F69279">
    <property type="entry name" value="F69279"/>
</dbReference>
<dbReference type="SMR" id="O30001"/>
<dbReference type="STRING" id="224325.AF_0238"/>
<dbReference type="PaxDb" id="224325-AF_0238"/>
<dbReference type="EnsemblBacteria" id="AAB90995">
    <property type="protein sequence ID" value="AAB90995"/>
    <property type="gene ID" value="AF_0238"/>
</dbReference>
<dbReference type="KEGG" id="afu:AF_0238"/>
<dbReference type="eggNOG" id="arCOG00987">
    <property type="taxonomic scope" value="Archaea"/>
</dbReference>
<dbReference type="HOGENOM" id="CLU_032087_3_0_2"/>
<dbReference type="OrthoDB" id="35866at2157"/>
<dbReference type="PhylomeDB" id="O30001"/>
<dbReference type="Proteomes" id="UP000002199">
    <property type="component" value="Chromosome"/>
</dbReference>
<dbReference type="GO" id="GO:0003723">
    <property type="term" value="F:RNA binding"/>
    <property type="evidence" value="ECO:0007669"/>
    <property type="project" value="InterPro"/>
</dbReference>
<dbReference type="GO" id="GO:0160148">
    <property type="term" value="F:tRNA pseudouridine(55) synthase activity"/>
    <property type="evidence" value="ECO:0007669"/>
    <property type="project" value="UniProtKB-EC"/>
</dbReference>
<dbReference type="GO" id="GO:0000495">
    <property type="term" value="P:box H/ACA sno(s)RNA 3'-end processing"/>
    <property type="evidence" value="ECO:0007669"/>
    <property type="project" value="TreeGrafter"/>
</dbReference>
<dbReference type="GO" id="GO:1990481">
    <property type="term" value="P:mRNA pseudouridine synthesis"/>
    <property type="evidence" value="ECO:0007669"/>
    <property type="project" value="TreeGrafter"/>
</dbReference>
<dbReference type="GO" id="GO:0031118">
    <property type="term" value="P:rRNA pseudouridine synthesis"/>
    <property type="evidence" value="ECO:0007669"/>
    <property type="project" value="TreeGrafter"/>
</dbReference>
<dbReference type="GO" id="GO:0031120">
    <property type="term" value="P:snRNA pseudouridine synthesis"/>
    <property type="evidence" value="ECO:0007669"/>
    <property type="project" value="TreeGrafter"/>
</dbReference>
<dbReference type="GO" id="GO:0031119">
    <property type="term" value="P:tRNA pseudouridine synthesis"/>
    <property type="evidence" value="ECO:0007669"/>
    <property type="project" value="UniProtKB-UniRule"/>
</dbReference>
<dbReference type="CDD" id="cd02572">
    <property type="entry name" value="PseudoU_synth_hDyskerin"/>
    <property type="match status" value="1"/>
</dbReference>
<dbReference type="CDD" id="cd21148">
    <property type="entry name" value="PUA_Cbf5"/>
    <property type="match status" value="1"/>
</dbReference>
<dbReference type="FunFam" id="3.30.2350.10:FF:000001">
    <property type="entry name" value="H/ACA ribonucleoprotein complex subunit CBF5"/>
    <property type="match status" value="1"/>
</dbReference>
<dbReference type="Gene3D" id="3.30.2350.10">
    <property type="entry name" value="Pseudouridine synthase"/>
    <property type="match status" value="1"/>
</dbReference>
<dbReference type="Gene3D" id="2.30.130.10">
    <property type="entry name" value="PUA domain"/>
    <property type="match status" value="1"/>
</dbReference>
<dbReference type="HAMAP" id="MF_01081">
    <property type="entry name" value="TruB_arch"/>
    <property type="match status" value="1"/>
</dbReference>
<dbReference type="InterPro" id="IPR012960">
    <property type="entry name" value="Dyskerin-like"/>
</dbReference>
<dbReference type="InterPro" id="IPR020103">
    <property type="entry name" value="PsdUridine_synth_cat_dom_sf"/>
</dbReference>
<dbReference type="InterPro" id="IPR002501">
    <property type="entry name" value="PsdUridine_synth_N"/>
</dbReference>
<dbReference type="InterPro" id="IPR002478">
    <property type="entry name" value="PUA"/>
</dbReference>
<dbReference type="InterPro" id="IPR015947">
    <property type="entry name" value="PUA-like_sf"/>
</dbReference>
<dbReference type="InterPro" id="IPR036974">
    <property type="entry name" value="PUA_sf"/>
</dbReference>
<dbReference type="InterPro" id="IPR004802">
    <property type="entry name" value="tRNA_PsdUridine_synth_B_fam"/>
</dbReference>
<dbReference type="InterPro" id="IPR026326">
    <property type="entry name" value="TruB_arch"/>
</dbReference>
<dbReference type="InterPro" id="IPR032819">
    <property type="entry name" value="TruB_C"/>
</dbReference>
<dbReference type="InterPro" id="IPR004521">
    <property type="entry name" value="Uncharacterised_CHP00451"/>
</dbReference>
<dbReference type="NCBIfam" id="TIGR00425">
    <property type="entry name" value="CBF5"/>
    <property type="match status" value="1"/>
</dbReference>
<dbReference type="NCBIfam" id="NF003280">
    <property type="entry name" value="PRK04270.1"/>
    <property type="match status" value="1"/>
</dbReference>
<dbReference type="NCBIfam" id="TIGR00451">
    <property type="entry name" value="unchar_dom_2"/>
    <property type="match status" value="1"/>
</dbReference>
<dbReference type="PANTHER" id="PTHR23127">
    <property type="entry name" value="CENTROMERE/MICROTUBULE BINDING PROTEIN CBF5"/>
    <property type="match status" value="1"/>
</dbReference>
<dbReference type="PANTHER" id="PTHR23127:SF0">
    <property type="entry name" value="H_ACA RIBONUCLEOPROTEIN COMPLEX SUBUNIT DKC1"/>
    <property type="match status" value="1"/>
</dbReference>
<dbReference type="Pfam" id="PF08068">
    <property type="entry name" value="DKCLD"/>
    <property type="match status" value="1"/>
</dbReference>
<dbReference type="Pfam" id="PF01472">
    <property type="entry name" value="PUA"/>
    <property type="match status" value="1"/>
</dbReference>
<dbReference type="Pfam" id="PF16198">
    <property type="entry name" value="TruB_C_2"/>
    <property type="match status" value="1"/>
</dbReference>
<dbReference type="Pfam" id="PF01509">
    <property type="entry name" value="TruB_N"/>
    <property type="match status" value="1"/>
</dbReference>
<dbReference type="SMART" id="SM01136">
    <property type="entry name" value="DKCLD"/>
    <property type="match status" value="1"/>
</dbReference>
<dbReference type="SMART" id="SM00359">
    <property type="entry name" value="PUA"/>
    <property type="match status" value="1"/>
</dbReference>
<dbReference type="SUPFAM" id="SSF55120">
    <property type="entry name" value="Pseudouridine synthase"/>
    <property type="match status" value="1"/>
</dbReference>
<dbReference type="SUPFAM" id="SSF88697">
    <property type="entry name" value="PUA domain-like"/>
    <property type="match status" value="1"/>
</dbReference>
<dbReference type="PROSITE" id="PS50890">
    <property type="entry name" value="PUA"/>
    <property type="match status" value="1"/>
</dbReference>
<sequence length="325" mass="37158">MKLENFYVKDDASTDESYGCYPTKRPMEEYIRKGLVCIDKPMGPSSHEVVVWVRRILNVSKTGHAGTLDPRVTGVLPIFIENATKMVKFLQESSKEYVCLMRLHGDAKREDVEKVMKLFVGRIYQRPPLKSAVKKVLRIREIYEMELLEMEGRDVLFRVVTESGTYIRKLCRDIGEVLGTGAHMQELRRTRTGKFGEDMCYTLQDLLDAYVFWKEEGEEKYLREIIKPMEVAAAELPKIVIKDSAVDAICHGANLSVRGVAYVEKNVKKDSTVAIFTLKNELVAIGRALMDAEDIYRLKKGIAADIQRVMMERGVYPKVWKSSSD</sequence>
<proteinExistence type="inferred from homology"/>
<evidence type="ECO:0000255" key="1">
    <source>
        <dbReference type="HAMAP-Rule" id="MF_01081"/>
    </source>
</evidence>
<organism>
    <name type="scientific">Archaeoglobus fulgidus (strain ATCC 49558 / DSM 4304 / JCM 9628 / NBRC 100126 / VC-16)</name>
    <dbReference type="NCBI Taxonomy" id="224325"/>
    <lineage>
        <taxon>Archaea</taxon>
        <taxon>Methanobacteriati</taxon>
        <taxon>Methanobacteriota</taxon>
        <taxon>Archaeoglobi</taxon>
        <taxon>Archaeoglobales</taxon>
        <taxon>Archaeoglobaceae</taxon>
        <taxon>Archaeoglobus</taxon>
    </lineage>
</organism>
<feature type="chain" id="PRO_0000121955" description="Probable tRNA pseudouridine synthase B">
    <location>
        <begin position="1"/>
        <end position="325"/>
    </location>
</feature>
<feature type="domain" description="PUA" evidence="1">
    <location>
        <begin position="236"/>
        <end position="311"/>
    </location>
</feature>
<feature type="active site" description="Nucleophile" evidence="1">
    <location>
        <position position="69"/>
    </location>
</feature>
<reference key="1">
    <citation type="journal article" date="1997" name="Nature">
        <title>The complete genome sequence of the hyperthermophilic, sulphate-reducing archaeon Archaeoglobus fulgidus.</title>
        <authorList>
            <person name="Klenk H.-P."/>
            <person name="Clayton R.A."/>
            <person name="Tomb J.-F."/>
            <person name="White O."/>
            <person name="Nelson K.E."/>
            <person name="Ketchum K.A."/>
            <person name="Dodson R.J."/>
            <person name="Gwinn M.L."/>
            <person name="Hickey E.K."/>
            <person name="Peterson J.D."/>
            <person name="Richardson D.L."/>
            <person name="Kerlavage A.R."/>
            <person name="Graham D.E."/>
            <person name="Kyrpides N.C."/>
            <person name="Fleischmann R.D."/>
            <person name="Quackenbush J."/>
            <person name="Lee N.H."/>
            <person name="Sutton G.G."/>
            <person name="Gill S.R."/>
            <person name="Kirkness E.F."/>
            <person name="Dougherty B.A."/>
            <person name="McKenney K."/>
            <person name="Adams M.D."/>
            <person name="Loftus B.J."/>
            <person name="Peterson S.N."/>
            <person name="Reich C.I."/>
            <person name="McNeil L.K."/>
            <person name="Badger J.H."/>
            <person name="Glodek A."/>
            <person name="Zhou L."/>
            <person name="Overbeek R."/>
            <person name="Gocayne J.D."/>
            <person name="Weidman J.F."/>
            <person name="McDonald L.A."/>
            <person name="Utterback T.R."/>
            <person name="Cotton M.D."/>
            <person name="Spriggs T."/>
            <person name="Artiach P."/>
            <person name="Kaine B.P."/>
            <person name="Sykes S.M."/>
            <person name="Sadow P.W."/>
            <person name="D'Andrea K.P."/>
            <person name="Bowman C."/>
            <person name="Fujii C."/>
            <person name="Garland S.A."/>
            <person name="Mason T.M."/>
            <person name="Olsen G.J."/>
            <person name="Fraser C.M."/>
            <person name="Smith H.O."/>
            <person name="Woese C.R."/>
            <person name="Venter J.C."/>
        </authorList>
    </citation>
    <scope>NUCLEOTIDE SEQUENCE [LARGE SCALE GENOMIC DNA]</scope>
    <source>
        <strain>ATCC 49558 / DSM 4304 / JCM 9628 / NBRC 100126 / VC-16</strain>
    </source>
</reference>
<name>TRUB_ARCFU</name>
<accession>O30001</accession>
<comment type="function">
    <text evidence="1">Could be responsible for synthesis of pseudouridine from uracil-55 in the psi GC loop of transfer RNAs.</text>
</comment>
<comment type="catalytic activity">
    <reaction evidence="1">
        <text>uridine(55) in tRNA = pseudouridine(55) in tRNA</text>
        <dbReference type="Rhea" id="RHEA:42532"/>
        <dbReference type="Rhea" id="RHEA-COMP:10101"/>
        <dbReference type="Rhea" id="RHEA-COMP:10102"/>
        <dbReference type="ChEBI" id="CHEBI:65314"/>
        <dbReference type="ChEBI" id="CHEBI:65315"/>
        <dbReference type="EC" id="5.4.99.25"/>
    </reaction>
</comment>
<comment type="similarity">
    <text evidence="1">Belongs to the pseudouridine synthase TruB family. Type 2 subfamily.</text>
</comment>
<gene>
    <name evidence="1" type="primary">truB</name>
    <name type="ordered locus">AF_0238</name>
</gene>
<keyword id="KW-0413">Isomerase</keyword>
<keyword id="KW-1185">Reference proteome</keyword>
<keyword id="KW-0819">tRNA processing</keyword>
<protein>
    <recommendedName>
        <fullName evidence="1">Probable tRNA pseudouridine synthase B</fullName>
        <ecNumber evidence="1">5.4.99.25</ecNumber>
    </recommendedName>
    <alternativeName>
        <fullName evidence="1">tRNA pseudouridine(55) synthase</fullName>
        <shortName evidence="1">Psi55 synthase</shortName>
    </alternativeName>
    <alternativeName>
        <fullName evidence="1">tRNA pseudouridylate synthase</fullName>
    </alternativeName>
    <alternativeName>
        <fullName evidence="1">tRNA-uridine isomerase</fullName>
    </alternativeName>
</protein>